<comment type="function">
    <text evidence="1">General inhibitor of pancreatic serine proteases: inhibits chymotrypsin, trypsin, elastases, factor X, kallikrein as well as a variety of other proteases.</text>
</comment>
<comment type="subunit">
    <text evidence="1">Homodimer.</text>
</comment>
<comment type="subcellular location">
    <subcellularLocation>
        <location evidence="1">Periplasm</location>
    </subcellularLocation>
</comment>
<comment type="similarity">
    <text evidence="1">Belongs to the protease inhibitor I11 (ecotin) family.</text>
</comment>
<name>ECOT_SALEP</name>
<dbReference type="EMBL" id="AM933172">
    <property type="protein sequence ID" value="CAR33829.1"/>
    <property type="molecule type" value="Genomic_DNA"/>
</dbReference>
<dbReference type="RefSeq" id="WP_000781589.1">
    <property type="nucleotide sequence ID" value="NC_011294.1"/>
</dbReference>
<dbReference type="SMR" id="B5R236"/>
<dbReference type="MEROPS" id="I11.001"/>
<dbReference type="KEGG" id="set:SEN2245"/>
<dbReference type="HOGENOM" id="CLU_111565_0_0_6"/>
<dbReference type="Proteomes" id="UP000000613">
    <property type="component" value="Chromosome"/>
</dbReference>
<dbReference type="GO" id="GO:0042597">
    <property type="term" value="C:periplasmic space"/>
    <property type="evidence" value="ECO:0007669"/>
    <property type="project" value="UniProtKB-SubCell"/>
</dbReference>
<dbReference type="GO" id="GO:0004867">
    <property type="term" value="F:serine-type endopeptidase inhibitor activity"/>
    <property type="evidence" value="ECO:0007669"/>
    <property type="project" value="UniProtKB-UniRule"/>
</dbReference>
<dbReference type="CDD" id="cd00242">
    <property type="entry name" value="Ecotin"/>
    <property type="match status" value="1"/>
</dbReference>
<dbReference type="FunFam" id="2.60.40.550:FF:000001">
    <property type="entry name" value="Ecotin"/>
    <property type="match status" value="1"/>
</dbReference>
<dbReference type="FunFam" id="4.10.1230.10:FF:000001">
    <property type="entry name" value="Ecotin"/>
    <property type="match status" value="1"/>
</dbReference>
<dbReference type="Gene3D" id="2.60.40.550">
    <property type="entry name" value="Ecotin"/>
    <property type="match status" value="1"/>
</dbReference>
<dbReference type="Gene3D" id="4.10.1230.10">
    <property type="entry name" value="Ecotin, trypsin inhibitor"/>
    <property type="match status" value="1"/>
</dbReference>
<dbReference type="HAMAP" id="MF_00706">
    <property type="entry name" value="Ecotin"/>
    <property type="match status" value="1"/>
</dbReference>
<dbReference type="InterPro" id="IPR027438">
    <property type="entry name" value="Ecotin_C"/>
</dbReference>
<dbReference type="InterPro" id="IPR036198">
    <property type="entry name" value="Ecotin_sf"/>
</dbReference>
<dbReference type="InterPro" id="IPR005658">
    <property type="entry name" value="Prot_inh_ecotin"/>
</dbReference>
<dbReference type="InterPro" id="IPR023084">
    <property type="entry name" value="Prot_inh_ecotin_gammaproteobac"/>
</dbReference>
<dbReference type="NCBIfam" id="NF002987">
    <property type="entry name" value="PRK03719.1"/>
    <property type="match status" value="1"/>
</dbReference>
<dbReference type="PANTHER" id="PTHR35890">
    <property type="match status" value="1"/>
</dbReference>
<dbReference type="PANTHER" id="PTHR35890:SF3">
    <property type="entry name" value="ECOTIN"/>
    <property type="match status" value="1"/>
</dbReference>
<dbReference type="Pfam" id="PF03974">
    <property type="entry name" value="Ecotin"/>
    <property type="match status" value="1"/>
</dbReference>
<dbReference type="PIRSF" id="PIRSF006865">
    <property type="entry name" value="Prot_inh_ecotin"/>
    <property type="match status" value="1"/>
</dbReference>
<dbReference type="SUPFAM" id="SSF49772">
    <property type="entry name" value="Ecotin, trypsin inhibitor"/>
    <property type="match status" value="1"/>
</dbReference>
<evidence type="ECO:0000255" key="1">
    <source>
        <dbReference type="HAMAP-Rule" id="MF_00706"/>
    </source>
</evidence>
<reference key="1">
    <citation type="journal article" date="2008" name="Genome Res.">
        <title>Comparative genome analysis of Salmonella enteritidis PT4 and Salmonella gallinarum 287/91 provides insights into evolutionary and host adaptation pathways.</title>
        <authorList>
            <person name="Thomson N.R."/>
            <person name="Clayton D.J."/>
            <person name="Windhorst D."/>
            <person name="Vernikos G."/>
            <person name="Davidson S."/>
            <person name="Churcher C."/>
            <person name="Quail M.A."/>
            <person name="Stevens M."/>
            <person name="Jones M.A."/>
            <person name="Watson M."/>
            <person name="Barron A."/>
            <person name="Layton A."/>
            <person name="Pickard D."/>
            <person name="Kingsley R.A."/>
            <person name="Bignell A."/>
            <person name="Clark L."/>
            <person name="Harris B."/>
            <person name="Ormond D."/>
            <person name="Abdellah Z."/>
            <person name="Brooks K."/>
            <person name="Cherevach I."/>
            <person name="Chillingworth T."/>
            <person name="Woodward J."/>
            <person name="Norberczak H."/>
            <person name="Lord A."/>
            <person name="Arrowsmith C."/>
            <person name="Jagels K."/>
            <person name="Moule S."/>
            <person name="Mungall K."/>
            <person name="Saunders M."/>
            <person name="Whitehead S."/>
            <person name="Chabalgoity J.A."/>
            <person name="Maskell D."/>
            <person name="Humphreys T."/>
            <person name="Roberts M."/>
            <person name="Barrow P.A."/>
            <person name="Dougan G."/>
            <person name="Parkhill J."/>
        </authorList>
    </citation>
    <scope>NUCLEOTIDE SEQUENCE [LARGE SCALE GENOMIC DNA]</scope>
    <source>
        <strain>P125109</strain>
    </source>
</reference>
<gene>
    <name evidence="1" type="primary">eco</name>
    <name type="ordered locus">SEN2245</name>
</gene>
<keyword id="KW-1015">Disulfide bond</keyword>
<keyword id="KW-0574">Periplasm</keyword>
<keyword id="KW-0646">Protease inhibitor</keyword>
<keyword id="KW-0722">Serine protease inhibitor</keyword>
<keyword id="KW-0732">Signal</keyword>
<organism>
    <name type="scientific">Salmonella enteritidis PT4 (strain P125109)</name>
    <dbReference type="NCBI Taxonomy" id="550537"/>
    <lineage>
        <taxon>Bacteria</taxon>
        <taxon>Pseudomonadati</taxon>
        <taxon>Pseudomonadota</taxon>
        <taxon>Gammaproteobacteria</taxon>
        <taxon>Enterobacterales</taxon>
        <taxon>Enterobacteriaceae</taxon>
        <taxon>Salmonella</taxon>
    </lineage>
</organism>
<sequence>MKMFVPAVVFAALASASAWANNGDTAQPLEKIAPYPQAEKGMKRQVITLTPQQDESTLKVELLIGQTLNVDCNQHRLGGTLETKTLEGWGYDYYVFDNVTSPVSTMMACPEGKKEQKFVTAWLGEDGMLRYNSKLPIVVYTPANVDVKYRIWKADANVQNAVAR</sequence>
<accession>B5R236</accession>
<protein>
    <recommendedName>
        <fullName evidence="1">Ecotin</fullName>
    </recommendedName>
</protein>
<proteinExistence type="inferred from homology"/>
<feature type="signal peptide" evidence="1">
    <location>
        <begin position="1"/>
        <end position="20"/>
    </location>
</feature>
<feature type="chain" id="PRO_5000397707" description="Ecotin">
    <location>
        <begin position="21"/>
        <end position="164"/>
    </location>
</feature>
<feature type="site" description="Reactive bond" evidence="1">
    <location>
        <begin position="106"/>
        <end position="107"/>
    </location>
</feature>
<feature type="disulfide bond" evidence="1">
    <location>
        <begin position="72"/>
        <end position="109"/>
    </location>
</feature>